<organism>
    <name type="scientific">Geobacter metallireducens (strain ATCC 53774 / DSM 7210 / GS-15)</name>
    <dbReference type="NCBI Taxonomy" id="269799"/>
    <lineage>
        <taxon>Bacteria</taxon>
        <taxon>Pseudomonadati</taxon>
        <taxon>Thermodesulfobacteriota</taxon>
        <taxon>Desulfuromonadia</taxon>
        <taxon>Geobacterales</taxon>
        <taxon>Geobacteraceae</taxon>
        <taxon>Geobacter</taxon>
    </lineage>
</organism>
<accession>Q39W85</accession>
<name>RRF_GEOMG</name>
<protein>
    <recommendedName>
        <fullName evidence="1">Ribosome-recycling factor</fullName>
        <shortName evidence="1">RRF</shortName>
    </recommendedName>
    <alternativeName>
        <fullName evidence="1">Ribosome-releasing factor</fullName>
    </alternativeName>
</protein>
<evidence type="ECO:0000255" key="1">
    <source>
        <dbReference type="HAMAP-Rule" id="MF_00040"/>
    </source>
</evidence>
<gene>
    <name evidence="1" type="primary">frr</name>
    <name type="ordered locus">Gmet_1253</name>
</gene>
<keyword id="KW-0963">Cytoplasm</keyword>
<keyword id="KW-0648">Protein biosynthesis</keyword>
<keyword id="KW-1185">Reference proteome</keyword>
<sequence length="185" mass="21021">MTKEVIADMKAHMEKSVDALRREYQKVRTGRATTGLLDDIKVEYYGNPSPLSQVATLSVPEPRTITIQPWEAKLIPVIEKAIMNANLGFTPANDGKTIRISLPPLTEERRKEIVKTLKKMAEDTKVAVRNIRRDGIDSLKKLEKDKKISEDDLKRAEKEVQDVTNTFVAKVEEVLTHKEKEVLEV</sequence>
<proteinExistence type="inferred from homology"/>
<reference key="1">
    <citation type="journal article" date="2009" name="BMC Microbiol.">
        <title>The genome sequence of Geobacter metallireducens: features of metabolism, physiology and regulation common and dissimilar to Geobacter sulfurreducens.</title>
        <authorList>
            <person name="Aklujkar M."/>
            <person name="Krushkal J."/>
            <person name="DiBartolo G."/>
            <person name="Lapidus A."/>
            <person name="Land M.L."/>
            <person name="Lovley D.R."/>
        </authorList>
    </citation>
    <scope>NUCLEOTIDE SEQUENCE [LARGE SCALE GENOMIC DNA]</scope>
    <source>
        <strain>ATCC 53774 / DSM 7210 / GS-15</strain>
    </source>
</reference>
<dbReference type="EMBL" id="CP000148">
    <property type="protein sequence ID" value="ABB31489.1"/>
    <property type="molecule type" value="Genomic_DNA"/>
</dbReference>
<dbReference type="RefSeq" id="WP_004512114.1">
    <property type="nucleotide sequence ID" value="NC_007517.1"/>
</dbReference>
<dbReference type="SMR" id="Q39W85"/>
<dbReference type="STRING" id="269799.Gmet_1253"/>
<dbReference type="KEGG" id="gme:Gmet_1253"/>
<dbReference type="eggNOG" id="COG0233">
    <property type="taxonomic scope" value="Bacteria"/>
</dbReference>
<dbReference type="HOGENOM" id="CLU_073981_2_0_7"/>
<dbReference type="Proteomes" id="UP000007073">
    <property type="component" value="Chromosome"/>
</dbReference>
<dbReference type="GO" id="GO:0005829">
    <property type="term" value="C:cytosol"/>
    <property type="evidence" value="ECO:0007669"/>
    <property type="project" value="GOC"/>
</dbReference>
<dbReference type="GO" id="GO:0043023">
    <property type="term" value="F:ribosomal large subunit binding"/>
    <property type="evidence" value="ECO:0007669"/>
    <property type="project" value="TreeGrafter"/>
</dbReference>
<dbReference type="GO" id="GO:0002184">
    <property type="term" value="P:cytoplasmic translational termination"/>
    <property type="evidence" value="ECO:0007669"/>
    <property type="project" value="TreeGrafter"/>
</dbReference>
<dbReference type="CDD" id="cd00520">
    <property type="entry name" value="RRF"/>
    <property type="match status" value="1"/>
</dbReference>
<dbReference type="FunFam" id="1.10.132.20:FF:000001">
    <property type="entry name" value="Ribosome-recycling factor"/>
    <property type="match status" value="1"/>
</dbReference>
<dbReference type="FunFam" id="3.30.1360.40:FF:000001">
    <property type="entry name" value="Ribosome-recycling factor"/>
    <property type="match status" value="1"/>
</dbReference>
<dbReference type="Gene3D" id="3.30.1360.40">
    <property type="match status" value="1"/>
</dbReference>
<dbReference type="Gene3D" id="1.10.132.20">
    <property type="entry name" value="Ribosome-recycling factor"/>
    <property type="match status" value="1"/>
</dbReference>
<dbReference type="HAMAP" id="MF_00040">
    <property type="entry name" value="RRF"/>
    <property type="match status" value="1"/>
</dbReference>
<dbReference type="InterPro" id="IPR002661">
    <property type="entry name" value="Ribosome_recyc_fac"/>
</dbReference>
<dbReference type="InterPro" id="IPR023584">
    <property type="entry name" value="Ribosome_recyc_fac_dom"/>
</dbReference>
<dbReference type="InterPro" id="IPR036191">
    <property type="entry name" value="RRF_sf"/>
</dbReference>
<dbReference type="NCBIfam" id="TIGR00496">
    <property type="entry name" value="frr"/>
    <property type="match status" value="1"/>
</dbReference>
<dbReference type="PANTHER" id="PTHR20982:SF3">
    <property type="entry name" value="MITOCHONDRIAL RIBOSOME RECYCLING FACTOR PSEUDO 1"/>
    <property type="match status" value="1"/>
</dbReference>
<dbReference type="PANTHER" id="PTHR20982">
    <property type="entry name" value="RIBOSOME RECYCLING FACTOR"/>
    <property type="match status" value="1"/>
</dbReference>
<dbReference type="Pfam" id="PF01765">
    <property type="entry name" value="RRF"/>
    <property type="match status" value="1"/>
</dbReference>
<dbReference type="SUPFAM" id="SSF55194">
    <property type="entry name" value="Ribosome recycling factor, RRF"/>
    <property type="match status" value="1"/>
</dbReference>
<comment type="function">
    <text evidence="1">Responsible for the release of ribosomes from messenger RNA at the termination of protein biosynthesis. May increase the efficiency of translation by recycling ribosomes from one round of translation to another.</text>
</comment>
<comment type="subcellular location">
    <subcellularLocation>
        <location evidence="1">Cytoplasm</location>
    </subcellularLocation>
</comment>
<comment type="similarity">
    <text evidence="1">Belongs to the RRF family.</text>
</comment>
<feature type="chain" id="PRO_1000003170" description="Ribosome-recycling factor">
    <location>
        <begin position="1"/>
        <end position="185"/>
    </location>
</feature>